<name>LPLA_BLOPB</name>
<protein>
    <recommendedName>
        <fullName evidence="1">Lipoate-protein ligase A</fullName>
        <ecNumber evidence="1">6.3.1.20</ecNumber>
    </recommendedName>
    <alternativeName>
        <fullName evidence="1">Lipoate--protein ligase</fullName>
    </alternativeName>
</protein>
<evidence type="ECO:0000255" key="1">
    <source>
        <dbReference type="HAMAP-Rule" id="MF_01602"/>
    </source>
</evidence>
<evidence type="ECO:0000255" key="2">
    <source>
        <dbReference type="PROSITE-ProRule" id="PRU01067"/>
    </source>
</evidence>
<proteinExistence type="inferred from homology"/>
<reference key="1">
    <citation type="journal article" date="2005" name="Genome Res.">
        <title>Genome sequence of Blochmannia pennsylvanicus indicates parallel evolutionary trends among bacterial mutualists of insects.</title>
        <authorList>
            <person name="Degnan P.H."/>
            <person name="Lazarus A.B."/>
            <person name="Wernegreen J.J."/>
        </authorList>
    </citation>
    <scope>NUCLEOTIDE SEQUENCE [LARGE SCALE GENOMIC DNA]</scope>
    <source>
        <strain>BPEN</strain>
    </source>
</reference>
<gene>
    <name evidence="1" type="primary">lplA</name>
    <name type="ordered locus">BPEN_368</name>
</gene>
<organism>
    <name type="scientific">Blochmanniella pennsylvanica (strain BPEN)</name>
    <dbReference type="NCBI Taxonomy" id="291272"/>
    <lineage>
        <taxon>Bacteria</taxon>
        <taxon>Pseudomonadati</taxon>
        <taxon>Pseudomonadota</taxon>
        <taxon>Gammaproteobacteria</taxon>
        <taxon>Enterobacterales</taxon>
        <taxon>Enterobacteriaceae</taxon>
        <taxon>ant endosymbionts</taxon>
        <taxon>Candidatus Blochmanniella</taxon>
    </lineage>
</organism>
<comment type="function">
    <text evidence="1">Catalyzes both the ATP-dependent activation of exogenously supplied lipoate to lipoyl-AMP and the transfer of the activated lipoyl onto the lipoyl domains of lipoate-dependent enzymes.</text>
</comment>
<comment type="catalytic activity">
    <reaction evidence="1">
        <text>L-lysyl-[lipoyl-carrier protein] + (R)-lipoate + ATP = N(6)-[(R)-lipoyl]-L-lysyl-[lipoyl-carrier protein] + AMP + diphosphate + H(+)</text>
        <dbReference type="Rhea" id="RHEA:49288"/>
        <dbReference type="Rhea" id="RHEA-COMP:10500"/>
        <dbReference type="Rhea" id="RHEA-COMP:10502"/>
        <dbReference type="ChEBI" id="CHEBI:15378"/>
        <dbReference type="ChEBI" id="CHEBI:29969"/>
        <dbReference type="ChEBI" id="CHEBI:30616"/>
        <dbReference type="ChEBI" id="CHEBI:33019"/>
        <dbReference type="ChEBI" id="CHEBI:83088"/>
        <dbReference type="ChEBI" id="CHEBI:83099"/>
        <dbReference type="ChEBI" id="CHEBI:456215"/>
        <dbReference type="EC" id="6.3.1.20"/>
    </reaction>
</comment>
<comment type="pathway">
    <text evidence="1">Protein modification; protein lipoylation via exogenous pathway; protein N(6)-(lipoyl)lysine from lipoate: step 1/2.</text>
</comment>
<comment type="pathway">
    <text evidence="1">Protein modification; protein lipoylation via exogenous pathway; protein N(6)-(lipoyl)lysine from lipoate: step 2/2.</text>
</comment>
<comment type="subunit">
    <text evidence="1">Monomer.</text>
</comment>
<comment type="subcellular location">
    <subcellularLocation>
        <location evidence="1">Cytoplasm</location>
    </subcellularLocation>
</comment>
<comment type="miscellaneous">
    <text evidence="1">In the transfer reaction, the free carboxyl group of lipoic acid is attached via an amide linkage to the epsilon-amino group of a specific lysine residue of lipoyl domains of lipoate-dependent enzymes.</text>
</comment>
<comment type="similarity">
    <text evidence="1">Belongs to the LplA family.</text>
</comment>
<dbReference type="EC" id="6.3.1.20" evidence="1"/>
<dbReference type="EMBL" id="CP000016">
    <property type="protein sequence ID" value="AAZ40993.1"/>
    <property type="molecule type" value="Genomic_DNA"/>
</dbReference>
<dbReference type="RefSeq" id="WP_011282902.1">
    <property type="nucleotide sequence ID" value="NC_007292.1"/>
</dbReference>
<dbReference type="SMR" id="Q492U9"/>
<dbReference type="STRING" id="291272.BPEN_368"/>
<dbReference type="KEGG" id="bpn:BPEN_368"/>
<dbReference type="eggNOG" id="COG0095">
    <property type="taxonomic scope" value="Bacteria"/>
</dbReference>
<dbReference type="HOGENOM" id="CLU_022986_0_1_6"/>
<dbReference type="OrthoDB" id="9787898at2"/>
<dbReference type="UniPathway" id="UPA00537">
    <property type="reaction ID" value="UER00594"/>
</dbReference>
<dbReference type="UniPathway" id="UPA00537">
    <property type="reaction ID" value="UER00595"/>
</dbReference>
<dbReference type="Proteomes" id="UP000007794">
    <property type="component" value="Chromosome"/>
</dbReference>
<dbReference type="GO" id="GO:0005829">
    <property type="term" value="C:cytosol"/>
    <property type="evidence" value="ECO:0007669"/>
    <property type="project" value="TreeGrafter"/>
</dbReference>
<dbReference type="GO" id="GO:0005524">
    <property type="term" value="F:ATP binding"/>
    <property type="evidence" value="ECO:0007669"/>
    <property type="project" value="UniProtKB-KW"/>
</dbReference>
<dbReference type="GO" id="GO:0016979">
    <property type="term" value="F:lipoate-protein ligase activity"/>
    <property type="evidence" value="ECO:0007669"/>
    <property type="project" value="UniProtKB-UniRule"/>
</dbReference>
<dbReference type="GO" id="GO:0017118">
    <property type="term" value="F:lipoyltransferase activity"/>
    <property type="evidence" value="ECO:0007669"/>
    <property type="project" value="TreeGrafter"/>
</dbReference>
<dbReference type="GO" id="GO:0036211">
    <property type="term" value="P:protein modification process"/>
    <property type="evidence" value="ECO:0007669"/>
    <property type="project" value="InterPro"/>
</dbReference>
<dbReference type="CDD" id="cd16443">
    <property type="entry name" value="LplA"/>
    <property type="match status" value="1"/>
</dbReference>
<dbReference type="FunFam" id="3.30.930.10:FF:000024">
    <property type="entry name" value="Lipoate-protein ligase A"/>
    <property type="match status" value="1"/>
</dbReference>
<dbReference type="Gene3D" id="3.30.930.10">
    <property type="entry name" value="Bira Bifunctional Protein, Domain 2"/>
    <property type="match status" value="1"/>
</dbReference>
<dbReference type="Gene3D" id="3.30.390.50">
    <property type="entry name" value="CO dehydrogenase flavoprotein, C-terminal domain"/>
    <property type="match status" value="1"/>
</dbReference>
<dbReference type="HAMAP" id="MF_01602">
    <property type="entry name" value="LplA"/>
    <property type="match status" value="1"/>
</dbReference>
<dbReference type="InterPro" id="IPR045864">
    <property type="entry name" value="aa-tRNA-synth_II/BPL/LPL"/>
</dbReference>
<dbReference type="InterPro" id="IPR004143">
    <property type="entry name" value="BPL_LPL_catalytic"/>
</dbReference>
<dbReference type="InterPro" id="IPR023741">
    <property type="entry name" value="Lipoate_ligase_A"/>
</dbReference>
<dbReference type="InterPro" id="IPR019491">
    <property type="entry name" value="Lipoate_protein_ligase_C"/>
</dbReference>
<dbReference type="InterPro" id="IPR004562">
    <property type="entry name" value="LipoylTrfase_LipoateP_Ligase"/>
</dbReference>
<dbReference type="NCBIfam" id="TIGR00545">
    <property type="entry name" value="lipoyltrans"/>
    <property type="match status" value="1"/>
</dbReference>
<dbReference type="PANTHER" id="PTHR12561">
    <property type="entry name" value="LIPOATE-PROTEIN LIGASE"/>
    <property type="match status" value="1"/>
</dbReference>
<dbReference type="PANTHER" id="PTHR12561:SF3">
    <property type="entry name" value="LIPOYLTRANSFERASE 1, MITOCHONDRIAL"/>
    <property type="match status" value="1"/>
</dbReference>
<dbReference type="Pfam" id="PF10437">
    <property type="entry name" value="Lip_prot_lig_C"/>
    <property type="match status" value="1"/>
</dbReference>
<dbReference type="Pfam" id="PF21948">
    <property type="entry name" value="LplA-B_cat"/>
    <property type="match status" value="1"/>
</dbReference>
<dbReference type="SUPFAM" id="SSF55681">
    <property type="entry name" value="Class II aaRS and biotin synthetases"/>
    <property type="match status" value="1"/>
</dbReference>
<dbReference type="SUPFAM" id="SSF82649">
    <property type="entry name" value="SufE/NifU"/>
    <property type="match status" value="1"/>
</dbReference>
<dbReference type="PROSITE" id="PS51733">
    <property type="entry name" value="BPL_LPL_CATALYTIC"/>
    <property type="match status" value="1"/>
</dbReference>
<sequence>MCSLRLLLSDSYDPWFNLSLEEYIYKNIPKKQSILFLWRNQNTVVIGRAQNAWKECNTRRMERDGIKLARRNSGGGAVFHDLGNTCFTFISTQEHYDKSISSNIVLNGLSYIGIKAIISGRNDIVIRTENGEHRKISGSAYRETSGRKFHHGTLLLHVDIDKLDYYLNPDFKKLETKGITSIRSRVANLNELKPGINHQEVCLGLTEAFFQHYGMKVKPEILSTDNFCKIPEFFKQFNKQSDWNWNFGSAPAFTHQLDTRFDWGSVTLHCDIERGIIHRSHIFTDSLDPSPLEILAKKLVGIPYNNKSILCCCKEWMQSWPQYKKELSEVSHWLIKTIS</sequence>
<accession>Q492U9</accession>
<keyword id="KW-0067">ATP-binding</keyword>
<keyword id="KW-0963">Cytoplasm</keyword>
<keyword id="KW-0436">Ligase</keyword>
<keyword id="KW-0547">Nucleotide-binding</keyword>
<keyword id="KW-1185">Reference proteome</keyword>
<feature type="chain" id="PRO_0000311125" description="Lipoate-protein ligase A">
    <location>
        <begin position="1"/>
        <end position="339"/>
    </location>
</feature>
<feature type="domain" description="BPL/LPL catalytic" evidence="2">
    <location>
        <begin position="29"/>
        <end position="217"/>
    </location>
</feature>
<feature type="binding site" evidence="1">
    <location>
        <position position="71"/>
    </location>
    <ligand>
        <name>ATP</name>
        <dbReference type="ChEBI" id="CHEBI:30616"/>
    </ligand>
</feature>
<feature type="binding site" evidence="1">
    <location>
        <begin position="76"/>
        <end position="79"/>
    </location>
    <ligand>
        <name>ATP</name>
        <dbReference type="ChEBI" id="CHEBI:30616"/>
    </ligand>
</feature>
<feature type="binding site" evidence="1">
    <location>
        <position position="135"/>
    </location>
    <ligand>
        <name>(R)-lipoate</name>
        <dbReference type="ChEBI" id="CHEBI:83088"/>
    </ligand>
</feature>
<feature type="binding site" evidence="1">
    <location>
        <position position="135"/>
    </location>
    <ligand>
        <name>ATP</name>
        <dbReference type="ChEBI" id="CHEBI:30616"/>
    </ligand>
</feature>